<evidence type="ECO:0000250" key="1">
    <source>
        <dbReference type="UniProtKB" id="A0A6C0WW36"/>
    </source>
</evidence>
<evidence type="ECO:0000250" key="2">
    <source>
        <dbReference type="UniProtKB" id="Q2HXI6"/>
    </source>
</evidence>
<evidence type="ECO:0000250" key="3">
    <source>
        <dbReference type="UniProtKB" id="Q9FLN8"/>
    </source>
</evidence>
<evidence type="ECO:0000250" key="4">
    <source>
        <dbReference type="UniProtKB" id="Q9FZN8"/>
    </source>
</evidence>
<evidence type="ECO:0000303" key="5">
    <source ref="1"/>
</evidence>
<evidence type="ECO:0000305" key="6"/>
<protein>
    <recommendedName>
        <fullName evidence="5">Probable caffeine synthase 5</fullName>
        <ecNumber evidence="4">2.1.1.-</ecNumber>
    </recommendedName>
</protein>
<proteinExistence type="inferred from homology"/>
<feature type="chain" id="PRO_0000451798" description="Probable caffeine synthase 5">
    <location>
        <begin position="1"/>
        <end position="365"/>
    </location>
</feature>
<feature type="binding site" evidence="1">
    <location>
        <position position="18"/>
    </location>
    <ligand>
        <name>S-adenosyl-L-homocysteine</name>
        <dbReference type="ChEBI" id="CHEBI:57856"/>
    </ligand>
</feature>
<feature type="binding site" evidence="1">
    <location>
        <position position="25"/>
    </location>
    <ligand>
        <name>caffeine</name>
        <dbReference type="ChEBI" id="CHEBI:27732"/>
    </ligand>
</feature>
<feature type="binding site" evidence="1">
    <location>
        <position position="61"/>
    </location>
    <ligand>
        <name>S-adenosyl-L-homocysteine</name>
        <dbReference type="ChEBI" id="CHEBI:57856"/>
    </ligand>
</feature>
<feature type="binding site" evidence="1">
    <location>
        <position position="66"/>
    </location>
    <ligand>
        <name>S-adenosyl-L-homocysteine</name>
        <dbReference type="ChEBI" id="CHEBI:57856"/>
    </ligand>
</feature>
<feature type="binding site" evidence="1">
    <location>
        <position position="98"/>
    </location>
    <ligand>
        <name>S-adenosyl-L-homocysteine</name>
        <dbReference type="ChEBI" id="CHEBI:57856"/>
    </ligand>
</feature>
<feature type="binding site" evidence="1">
    <location>
        <position position="99"/>
    </location>
    <ligand>
        <name>S-adenosyl-L-homocysteine</name>
        <dbReference type="ChEBI" id="CHEBI:57856"/>
    </ligand>
</feature>
<feature type="binding site" evidence="1">
    <location>
        <position position="134"/>
    </location>
    <ligand>
        <name>S-adenosyl-L-homocysteine</name>
        <dbReference type="ChEBI" id="CHEBI:57856"/>
    </ligand>
</feature>
<feature type="binding site" evidence="1">
    <location>
        <position position="135"/>
    </location>
    <ligand>
        <name>S-adenosyl-L-homocysteine</name>
        <dbReference type="ChEBI" id="CHEBI:57856"/>
    </ligand>
</feature>
<feature type="binding site" evidence="1">
    <location>
        <position position="152"/>
    </location>
    <ligand>
        <name>caffeine</name>
        <dbReference type="ChEBI" id="CHEBI:27732"/>
    </ligand>
</feature>
<feature type="binding site" evidence="1">
    <location>
        <position position="155"/>
    </location>
    <ligand>
        <name>caffeine</name>
        <dbReference type="ChEBI" id="CHEBI:27732"/>
    </ligand>
</feature>
<feature type="binding site" evidence="1">
    <location>
        <position position="156"/>
    </location>
    <ligand>
        <name>caffeine</name>
        <dbReference type="ChEBI" id="CHEBI:27732"/>
    </ligand>
</feature>
<feature type="binding site" evidence="3">
    <location>
        <position position="173"/>
    </location>
    <ligand>
        <name>Mg(2+)</name>
        <dbReference type="ChEBI" id="CHEBI:18420"/>
    </ligand>
</feature>
<feature type="binding site" evidence="3">
    <location>
        <position position="259"/>
    </location>
    <ligand>
        <name>Mg(2+)</name>
        <dbReference type="ChEBI" id="CHEBI:18420"/>
    </ligand>
</feature>
<feature type="binding site" evidence="3">
    <location>
        <position position="261"/>
    </location>
    <ligand>
        <name>Mg(2+)</name>
        <dbReference type="ChEBI" id="CHEBI:18420"/>
    </ligand>
</feature>
<feature type="binding site" evidence="3">
    <location>
        <position position="262"/>
    </location>
    <ligand>
        <name>Mg(2+)</name>
        <dbReference type="ChEBI" id="CHEBI:18420"/>
    </ligand>
</feature>
<feature type="binding site" evidence="1">
    <location>
        <position position="317"/>
    </location>
    <ligand>
        <name>caffeine</name>
        <dbReference type="ChEBI" id="CHEBI:27732"/>
    </ligand>
</feature>
<feature type="site" description="Involved in substrate discrimination" evidence="4">
    <location>
        <position position="149"/>
    </location>
</feature>
<feature type="site" description="Involved in substrate discrimination" evidence="2">
    <location>
        <position position="221"/>
    </location>
</feature>
<feature type="site" description="Involved in substrate discrimination" evidence="4">
    <location>
        <position position="265"/>
    </location>
</feature>
<feature type="site" description="Involved in substrate discrimination" evidence="4">
    <location>
        <position position="313"/>
    </location>
</feature>
<feature type="site" description="Involved in substrate discrimination" evidence="4">
    <location>
        <position position="328"/>
    </location>
</feature>
<gene>
    <name evidence="5" type="primary">TCS5</name>
</gene>
<dbReference type="EC" id="2.1.1.-" evidence="4"/>
<dbReference type="EMBL" id="JX647694">
    <property type="protein sequence ID" value="AFZ93517.1"/>
    <property type="molecule type" value="Genomic_DNA"/>
</dbReference>
<dbReference type="SMR" id="L0BUM3"/>
<dbReference type="GO" id="GO:0046872">
    <property type="term" value="F:metal ion binding"/>
    <property type="evidence" value="ECO:0007669"/>
    <property type="project" value="UniProtKB-KW"/>
</dbReference>
<dbReference type="GO" id="GO:0008168">
    <property type="term" value="F:methyltransferase activity"/>
    <property type="evidence" value="ECO:0007669"/>
    <property type="project" value="UniProtKB-KW"/>
</dbReference>
<dbReference type="GO" id="GO:0032259">
    <property type="term" value="P:methylation"/>
    <property type="evidence" value="ECO:0007669"/>
    <property type="project" value="UniProtKB-KW"/>
</dbReference>
<dbReference type="Gene3D" id="1.10.1200.270">
    <property type="entry name" value="Methyltransferase, alpha-helical capping domain"/>
    <property type="match status" value="1"/>
</dbReference>
<dbReference type="Gene3D" id="3.40.50.150">
    <property type="entry name" value="Vaccinia Virus protein VP39"/>
    <property type="match status" value="1"/>
</dbReference>
<dbReference type="InterPro" id="IPR005299">
    <property type="entry name" value="MeTrfase_7"/>
</dbReference>
<dbReference type="InterPro" id="IPR042086">
    <property type="entry name" value="MeTrfase_capping"/>
</dbReference>
<dbReference type="InterPro" id="IPR029063">
    <property type="entry name" value="SAM-dependent_MTases_sf"/>
</dbReference>
<dbReference type="PANTHER" id="PTHR31009">
    <property type="entry name" value="S-ADENOSYL-L-METHIONINE:CARBOXYL METHYLTRANSFERASE FAMILY PROTEIN"/>
    <property type="match status" value="1"/>
</dbReference>
<dbReference type="Pfam" id="PF03492">
    <property type="entry name" value="Methyltransf_7"/>
    <property type="match status" value="1"/>
</dbReference>
<dbReference type="SUPFAM" id="SSF53335">
    <property type="entry name" value="S-adenosyl-L-methionine-dependent methyltransferases"/>
    <property type="match status" value="1"/>
</dbReference>
<name>TCS5_CAMSI</name>
<sequence length="365" mass="41098">MEVKEALFMNRGEGENSYAQNSSFTQKVASMTMPVLENAVETLFSKDFHLLQALNVVDLGCATSPNTFTVISTIKRMMEKKCRELNCQTLELQVYLNDLPGNDFNTLFKGLLSKVVVGNKCEEVSCYVMGVPGSFHGRLFPRNSLRLVHSCYSAHWLSQAPKGLTSREGLALNRRKIYISKTSPLVVREAYLSQFHEDFTMFLNARSQEVVPNGCMVLILPGRQSSNPSSMESCFTWELLAIAIGELVSQGLIDEDKLDTFNVPSYFPSLEEVKDIVERDGSFTIDHMVGFELDTPQMQENDKWVRVEKLAKAVRAFTEPIISNQFGHEIMDKLYDKFTYIVVSDLEGKIPKTTSIVLVLSKIIG</sequence>
<comment type="function">
    <text evidence="4">May be involved in the biosynthesis of caffeine.</text>
</comment>
<comment type="cofactor">
    <cofactor evidence="3">
        <name>Mg(2+)</name>
        <dbReference type="ChEBI" id="CHEBI:18420"/>
    </cofactor>
    <text evidence="3">Binds 1 Mg(2+) ion per subunit.</text>
</comment>
<comment type="pathway">
    <text evidence="4">Alkaloid biosynthesis.</text>
</comment>
<comment type="similarity">
    <text evidence="6">Belongs to the methyltransferase superfamily. Type-7 methyltransferase family.</text>
</comment>
<reference key="1">
    <citation type="submission" date="2012-09" db="EMBL/GenBank/DDBJ databases">
        <title>Cloning and analysis of the N-methyltransferase gene family involving in caffeine biosynthesis of tea plant.</title>
        <authorList>
            <person name="Jin J.Q."/>
            <person name="Chen L."/>
        </authorList>
    </citation>
    <scope>NUCLEOTIDE SEQUENCE [GENOMIC DNA]</scope>
    <source>
        <strain>cv. Baiye 1</strain>
    </source>
</reference>
<keyword id="KW-0460">Magnesium</keyword>
<keyword id="KW-0479">Metal-binding</keyword>
<keyword id="KW-0489">Methyltransferase</keyword>
<keyword id="KW-0808">Transferase</keyword>
<accession>L0BUM3</accession>
<organism>
    <name type="scientific">Camellia sinensis</name>
    <name type="common">Tea plant</name>
    <name type="synonym">Thea sinensis</name>
    <dbReference type="NCBI Taxonomy" id="4442"/>
    <lineage>
        <taxon>Eukaryota</taxon>
        <taxon>Viridiplantae</taxon>
        <taxon>Streptophyta</taxon>
        <taxon>Embryophyta</taxon>
        <taxon>Tracheophyta</taxon>
        <taxon>Spermatophyta</taxon>
        <taxon>Magnoliopsida</taxon>
        <taxon>eudicotyledons</taxon>
        <taxon>Gunneridae</taxon>
        <taxon>Pentapetalae</taxon>
        <taxon>asterids</taxon>
        <taxon>Ericales</taxon>
        <taxon>Theaceae</taxon>
        <taxon>Camellia</taxon>
    </lineage>
</organism>